<accession>O43812</accession>
<proteinExistence type="evidence at protein level"/>
<dbReference type="EMBL" id="AJ001481">
    <property type="protein sequence ID" value="CAA04776.1"/>
    <property type="molecule type" value="mRNA"/>
</dbReference>
<dbReference type="RefSeq" id="NP_036278.1">
    <property type="nucleotide sequence ID" value="NM_012146.1"/>
</dbReference>
<dbReference type="SMR" id="O43812"/>
<dbReference type="BioGRID" id="117753">
    <property type="interactions" value="6"/>
</dbReference>
<dbReference type="FunCoup" id="O43812">
    <property type="interactions" value="23"/>
</dbReference>
<dbReference type="IntAct" id="O43812">
    <property type="interactions" value="8"/>
</dbReference>
<dbReference type="TCDB" id="1.I.1.1.3">
    <property type="family name" value="the nuclear pore complex (npc) family"/>
</dbReference>
<dbReference type="BioMuta" id="HGNC:3079"/>
<dbReference type="MassIVE" id="O43812"/>
<dbReference type="PeptideAtlas" id="O43812"/>
<dbReference type="DNASU" id="26584"/>
<dbReference type="GeneID" id="26584"/>
<dbReference type="KEGG" id="hsa:26584"/>
<dbReference type="AGR" id="HGNC:3079"/>
<dbReference type="CTD" id="26584"/>
<dbReference type="GeneCards" id="DUX1"/>
<dbReference type="HGNC" id="HGNC:3079">
    <property type="gene designation" value="DUX1"/>
</dbReference>
<dbReference type="MIM" id="611441">
    <property type="type" value="gene"/>
</dbReference>
<dbReference type="neXtProt" id="NX_O43812"/>
<dbReference type="PharmGKB" id="PA27535"/>
<dbReference type="InParanoid" id="O43812"/>
<dbReference type="PAN-GO" id="O43812">
    <property type="GO annotations" value="4 GO annotations based on evolutionary models"/>
</dbReference>
<dbReference type="PhylomeDB" id="O43812"/>
<dbReference type="PathwayCommons" id="O43812"/>
<dbReference type="SignaLink" id="O43812"/>
<dbReference type="GenomeRNAi" id="26584"/>
<dbReference type="Pharos" id="O43812">
    <property type="development level" value="Tbio"/>
</dbReference>
<dbReference type="PRO" id="PR:O43812"/>
<dbReference type="Proteomes" id="UP000005640">
    <property type="component" value="Unplaced"/>
</dbReference>
<dbReference type="RNAct" id="O43812">
    <property type="molecule type" value="protein"/>
</dbReference>
<dbReference type="GO" id="GO:0005634">
    <property type="term" value="C:nucleus"/>
    <property type="evidence" value="ECO:0000318"/>
    <property type="project" value="GO_Central"/>
</dbReference>
<dbReference type="GO" id="GO:0001228">
    <property type="term" value="F:DNA-binding transcription activator activity, RNA polymerase II-specific"/>
    <property type="evidence" value="ECO:0000314"/>
    <property type="project" value="NTNU_SB"/>
</dbReference>
<dbReference type="GO" id="GO:0000981">
    <property type="term" value="F:DNA-binding transcription factor activity, RNA polymerase II-specific"/>
    <property type="evidence" value="ECO:0000318"/>
    <property type="project" value="GO_Central"/>
</dbReference>
<dbReference type="GO" id="GO:0000977">
    <property type="term" value="F:RNA polymerase II transcription regulatory region sequence-specific DNA binding"/>
    <property type="evidence" value="ECO:0000314"/>
    <property type="project" value="NTNU_SB"/>
</dbReference>
<dbReference type="GO" id="GO:0045944">
    <property type="term" value="P:positive regulation of transcription by RNA polymerase II"/>
    <property type="evidence" value="ECO:0000314"/>
    <property type="project" value="NTNU_SB"/>
</dbReference>
<dbReference type="GO" id="GO:0006357">
    <property type="term" value="P:regulation of transcription by RNA polymerase II"/>
    <property type="evidence" value="ECO:0000318"/>
    <property type="project" value="GO_Central"/>
</dbReference>
<dbReference type="CDD" id="cd00086">
    <property type="entry name" value="homeodomain"/>
    <property type="match status" value="2"/>
</dbReference>
<dbReference type="FunFam" id="1.10.10.60:FF:000325">
    <property type="entry name" value="Double homeobox protein 4"/>
    <property type="match status" value="1"/>
</dbReference>
<dbReference type="FunFam" id="1.10.10.60:FF:000354">
    <property type="entry name" value="Double homeobox protein 4"/>
    <property type="match status" value="1"/>
</dbReference>
<dbReference type="Gene3D" id="1.10.10.60">
    <property type="entry name" value="Homeodomain-like"/>
    <property type="match status" value="2"/>
</dbReference>
<dbReference type="InterPro" id="IPR001356">
    <property type="entry name" value="HD"/>
</dbReference>
<dbReference type="InterPro" id="IPR017970">
    <property type="entry name" value="Homeobox_CS"/>
</dbReference>
<dbReference type="InterPro" id="IPR051306">
    <property type="entry name" value="Homeobox_regulator"/>
</dbReference>
<dbReference type="InterPro" id="IPR009057">
    <property type="entry name" value="Homeodomain-like_sf"/>
</dbReference>
<dbReference type="InterPro" id="IPR000047">
    <property type="entry name" value="HTH_motif"/>
</dbReference>
<dbReference type="PANTHER" id="PTHR46123:SF3">
    <property type="entry name" value="DOUBLE HOMEOBOX PROTEIN 1-RELATED"/>
    <property type="match status" value="1"/>
</dbReference>
<dbReference type="PANTHER" id="PTHR46123">
    <property type="entry name" value="MIX-TYPE HOMEOBOX GENE 1-RELATED"/>
    <property type="match status" value="1"/>
</dbReference>
<dbReference type="Pfam" id="PF00046">
    <property type="entry name" value="Homeodomain"/>
    <property type="match status" value="2"/>
</dbReference>
<dbReference type="PRINTS" id="PR00031">
    <property type="entry name" value="HTHREPRESSR"/>
</dbReference>
<dbReference type="SMART" id="SM00389">
    <property type="entry name" value="HOX"/>
    <property type="match status" value="2"/>
</dbReference>
<dbReference type="SUPFAM" id="SSF46689">
    <property type="entry name" value="Homeodomain-like"/>
    <property type="match status" value="2"/>
</dbReference>
<dbReference type="PROSITE" id="PS00027">
    <property type="entry name" value="HOMEOBOX_1"/>
    <property type="match status" value="1"/>
</dbReference>
<dbReference type="PROSITE" id="PS50071">
    <property type="entry name" value="HOMEOBOX_2"/>
    <property type="match status" value="2"/>
</dbReference>
<protein>
    <recommendedName>
        <fullName>Double homeobox protein 1</fullName>
    </recommendedName>
</protein>
<keyword id="KW-0010">Activator</keyword>
<keyword id="KW-0238">DNA-binding</keyword>
<keyword id="KW-0371">Homeobox</keyword>
<keyword id="KW-0539">Nucleus</keyword>
<keyword id="KW-1185">Reference proteome</keyword>
<keyword id="KW-0677">Repeat</keyword>
<keyword id="KW-0804">Transcription</keyword>
<keyword id="KW-0805">Transcription regulation</keyword>
<reference key="1">
    <citation type="journal article" date="1998" name="Hum. Mol. Genet.">
        <title>Characterization of a double homeodomain protein (DUX1) encoded by a cDNA homologous to 3.3-kb dispersed repeated elements.</title>
        <authorList>
            <person name="Ding H."/>
            <person name="Beckers M.-C."/>
            <person name="Plaisance S."/>
            <person name="Marynen P."/>
            <person name="Collen D."/>
            <person name="Belayew A."/>
        </authorList>
    </citation>
    <scope>NUCLEOTIDE SEQUENCE [MRNA]</scope>
    <scope>FUNCTION</scope>
    <scope>SUBCELLULAR LOCATION</scope>
    <scope>TISSUE SPECIFICITY</scope>
    <source>
        <tissue>Rhabdomyosarcoma</tissue>
    </source>
</reference>
<reference key="2">
    <citation type="journal article" date="2005" name="Biochemistry">
        <title>Intracellular trafficking and dynamics of double homeodomain proteins.</title>
        <authorList>
            <person name="Oestlund C."/>
            <person name="Garcia-Carrasquillo R.M."/>
            <person name="Belayew A."/>
            <person name="Worman H.J."/>
        </authorList>
    </citation>
    <scope>SUBCELLULAR LOCATION</scope>
</reference>
<gene>
    <name type="primary">DUX1</name>
</gene>
<name>DUX1_HUMAN</name>
<sequence length="170" mass="19347">MALLTALDDTLPEEAQGPGRRMILLSTPSQSDALRACFERNLYPGIATKEELAQGIDIPEPRVQIWFQNERSCQLRQHRRQSRPWPGRRDPQKGRRKRTAITGSQTALLLRAFEKDRFPGIAAREELARETGLPESRIQIWFQNRRARHRGQSGRAPTQASIRCNAAPIG</sequence>
<comment type="function">
    <text evidence="4">Probable transcription activator. Binds the P5 DNA element sequence 5'-GATCTGAGTCTAATTGAGAATTACTGTAC-3'.</text>
</comment>
<comment type="interaction">
    <interactant intactId="EBI-11599346">
        <id>O43812</id>
    </interactant>
    <interactant intactId="EBI-1055572">
        <id>P17661</id>
        <label>DES</label>
    </interactant>
    <organismsDiffer>false</organismsDiffer>
    <experiments>4</experiments>
</comment>
<comment type="subcellular location">
    <subcellularLocation>
        <location evidence="1 3 4">Nucleus</location>
    </subcellularLocation>
    <text>Actively transported through the nuclear pore complex (NPC).</text>
</comment>
<comment type="tissue specificity">
    <text evidence="4">Expressed in rhabdomyosarcoma TE671 cells as well as in several other normal and cancer cells.</text>
</comment>
<comment type="domain">
    <text>Homeobox domain 2 confers nuclear targeting.</text>
</comment>
<comment type="miscellaneous">
    <text>DUX genes are present in 3.3-kilobase elements, a tandem repeat family scattered in the genome found on the short arms of all acrocentric chromosomes as well as on several other chromosomes.</text>
</comment>
<comment type="similarity">
    <text evidence="5">Belongs to the paired homeobox family.</text>
</comment>
<organism>
    <name type="scientific">Homo sapiens</name>
    <name type="common">Human</name>
    <dbReference type="NCBI Taxonomy" id="9606"/>
    <lineage>
        <taxon>Eukaryota</taxon>
        <taxon>Metazoa</taxon>
        <taxon>Chordata</taxon>
        <taxon>Craniata</taxon>
        <taxon>Vertebrata</taxon>
        <taxon>Euteleostomi</taxon>
        <taxon>Mammalia</taxon>
        <taxon>Eutheria</taxon>
        <taxon>Euarchontoglires</taxon>
        <taxon>Primates</taxon>
        <taxon>Haplorrhini</taxon>
        <taxon>Catarrhini</taxon>
        <taxon>Hominidae</taxon>
        <taxon>Homo</taxon>
    </lineage>
</organism>
<feature type="chain" id="PRO_0000252410" description="Double homeobox protein 1">
    <location>
        <begin position="1"/>
        <end position="170"/>
    </location>
</feature>
<feature type="DNA-binding region" description="Homeobox 1" evidence="1">
    <location>
        <begin position="19"/>
        <end position="78"/>
    </location>
</feature>
<feature type="DNA-binding region" description="Homeobox 2" evidence="1">
    <location>
        <begin position="94"/>
        <end position="153"/>
    </location>
</feature>
<feature type="region of interest" description="Disordered" evidence="2">
    <location>
        <begin position="75"/>
        <end position="100"/>
    </location>
</feature>
<evidence type="ECO:0000255" key="1">
    <source>
        <dbReference type="PROSITE-ProRule" id="PRU00108"/>
    </source>
</evidence>
<evidence type="ECO:0000256" key="2">
    <source>
        <dbReference type="SAM" id="MobiDB-lite"/>
    </source>
</evidence>
<evidence type="ECO:0000269" key="3">
    <source>
    </source>
</evidence>
<evidence type="ECO:0000269" key="4">
    <source>
    </source>
</evidence>
<evidence type="ECO:0000305" key="5"/>